<protein>
    <recommendedName>
        <fullName evidence="1">DNA topoisomerase 4 subunit A</fullName>
        <ecNumber evidence="1">5.6.2.2</ecNumber>
    </recommendedName>
    <alternativeName>
        <fullName evidence="1">Topoisomerase IV subunit A</fullName>
    </alternativeName>
</protein>
<evidence type="ECO:0000255" key="1">
    <source>
        <dbReference type="HAMAP-Rule" id="MF_00936"/>
    </source>
</evidence>
<evidence type="ECO:0000255" key="2">
    <source>
        <dbReference type="PROSITE-ProRule" id="PRU01384"/>
    </source>
</evidence>
<evidence type="ECO:0000256" key="3">
    <source>
        <dbReference type="SAM" id="MobiDB-lite"/>
    </source>
</evidence>
<name>PARC_ECO57</name>
<proteinExistence type="inferred from homology"/>
<comment type="function">
    <text evidence="1">Topoisomerase IV is essential for chromosome segregation. It relaxes supercoiled DNA. Performs the decatenation events required during the replication of a circular DNA molecule.</text>
</comment>
<comment type="catalytic activity">
    <reaction evidence="1">
        <text>ATP-dependent breakage, passage and rejoining of double-stranded DNA.</text>
        <dbReference type="EC" id="5.6.2.2"/>
    </reaction>
</comment>
<comment type="subunit">
    <text evidence="1">Heterotetramer composed of ParC and ParE.</text>
</comment>
<comment type="subcellular location">
    <subcellularLocation>
        <location evidence="1">Cell membrane</location>
        <topology evidence="1">Peripheral membrane protein</topology>
    </subcellularLocation>
</comment>
<comment type="similarity">
    <text evidence="1">Belongs to the type II topoisomerase GyrA/ParC subunit family. ParC type 1 subfamily.</text>
</comment>
<feature type="chain" id="PRO_0000145398" description="DNA topoisomerase 4 subunit A">
    <location>
        <begin position="1"/>
        <end position="752"/>
    </location>
</feature>
<feature type="domain" description="Topo IIA-type catalytic" evidence="2">
    <location>
        <begin position="31"/>
        <end position="494"/>
    </location>
</feature>
<feature type="region of interest" description="Disordered" evidence="3">
    <location>
        <begin position="472"/>
        <end position="492"/>
    </location>
</feature>
<feature type="region of interest" description="Disordered" evidence="3">
    <location>
        <begin position="718"/>
        <end position="752"/>
    </location>
</feature>
<feature type="compositionally biased region" description="Basic and acidic residues" evidence="3">
    <location>
        <begin position="473"/>
        <end position="492"/>
    </location>
</feature>
<feature type="compositionally biased region" description="Basic and acidic residues" evidence="3">
    <location>
        <begin position="732"/>
        <end position="743"/>
    </location>
</feature>
<feature type="active site" description="O-(5'-phospho-DNA)-tyrosine intermediate" evidence="1">
    <location>
        <position position="120"/>
    </location>
</feature>
<feature type="site" description="Interaction with DNA" evidence="1">
    <location>
        <position position="39"/>
    </location>
</feature>
<feature type="site" description="Interaction with DNA" evidence="1">
    <location>
        <position position="75"/>
    </location>
</feature>
<feature type="site" description="Interaction with DNA" evidence="1">
    <location>
        <position position="77"/>
    </location>
</feature>
<feature type="site" description="Transition state stabilizer" evidence="1">
    <location>
        <position position="119"/>
    </location>
</feature>
<sequence length="752" mass="83831">MSDMAERLALHEFTENAYLNYSMYVIMDRALPFIGDGLKPVQRRIVYAMSELGLNASAKFKKSARTVGDVLGKYHPHGDSACYEAMVLMAQPFSYRYPLVDGQGNWGAPDDPKSFAAMRYTESRLSKYSELLLSELGQGTADWVPNFDGTLQEPKMLPARLPNILLNGTTGIAVGMATDIPPHNLREVAQAAIALIDQPKTTLDQLLDIVQGPDYPTEAEIITSRAEIRKIYENGRGSVRMRAVWKKEDGAVVISALPHQVSGARVLEQIAAQMRNKKLPMVDDLRDESDHENPTRLVIVPRSNRVDMDQVMNHLFATTDLEKSYRINLNMIGLDGRPAVKNLLEILSEWLVFRRDTVRRRLNYRLEKVLKRLHILEGLLVAFLNIDEVIEIIRNEDEPKPALMSRFGLTETQAEAILELKLRHLAKLEEMKIRGEQSELEKERDQLQGILASERKMNNLLKKELQADAQAYGDDRRSPLQEREEAKAMSEHDMLPSEPVTIVLSQMGWVRSAKGHDIDAPGLNYKAGDSFKAAVKGKSNQPVVFVDSTGRSYAIDPITLPSARGQGEPLTGKLTLPPGATVDHMLMESDDQKLLMASDAGYGFVCTFNDLVARNRAGKALITLPENAHVMPPVVIEDASDMLLAITQAGRMLMFPVSDLPQLSKGKGNKIINIPSAEAARGEDGLAQLYVLPPQSTLTIHVGKRKIKLRPEELQKVTGERGRRGTLMRGLQRIDRVEIDSPRRASSGDSEE</sequence>
<reference key="1">
    <citation type="journal article" date="2001" name="Nature">
        <title>Genome sequence of enterohaemorrhagic Escherichia coli O157:H7.</title>
        <authorList>
            <person name="Perna N.T."/>
            <person name="Plunkett G. III"/>
            <person name="Burland V."/>
            <person name="Mau B."/>
            <person name="Glasner J.D."/>
            <person name="Rose D.J."/>
            <person name="Mayhew G.F."/>
            <person name="Evans P.S."/>
            <person name="Gregor J."/>
            <person name="Kirkpatrick H.A."/>
            <person name="Posfai G."/>
            <person name="Hackett J."/>
            <person name="Klink S."/>
            <person name="Boutin A."/>
            <person name="Shao Y."/>
            <person name="Miller L."/>
            <person name="Grotbeck E.J."/>
            <person name="Davis N.W."/>
            <person name="Lim A."/>
            <person name="Dimalanta E.T."/>
            <person name="Potamousis K."/>
            <person name="Apodaca J."/>
            <person name="Anantharaman T.S."/>
            <person name="Lin J."/>
            <person name="Yen G."/>
            <person name="Schwartz D.C."/>
            <person name="Welch R.A."/>
            <person name="Blattner F.R."/>
        </authorList>
    </citation>
    <scope>NUCLEOTIDE SEQUENCE [LARGE SCALE GENOMIC DNA]</scope>
    <source>
        <strain>O157:H7 / EDL933 / ATCC 700927 / EHEC</strain>
    </source>
</reference>
<reference key="2">
    <citation type="journal article" date="2001" name="DNA Res.">
        <title>Complete genome sequence of enterohemorrhagic Escherichia coli O157:H7 and genomic comparison with a laboratory strain K-12.</title>
        <authorList>
            <person name="Hayashi T."/>
            <person name="Makino K."/>
            <person name="Ohnishi M."/>
            <person name="Kurokawa K."/>
            <person name="Ishii K."/>
            <person name="Yokoyama K."/>
            <person name="Han C.-G."/>
            <person name="Ohtsubo E."/>
            <person name="Nakayama K."/>
            <person name="Murata T."/>
            <person name="Tanaka M."/>
            <person name="Tobe T."/>
            <person name="Iida T."/>
            <person name="Takami H."/>
            <person name="Honda T."/>
            <person name="Sasakawa C."/>
            <person name="Ogasawara N."/>
            <person name="Yasunaga T."/>
            <person name="Kuhara S."/>
            <person name="Shiba T."/>
            <person name="Hattori M."/>
            <person name="Shinagawa H."/>
        </authorList>
    </citation>
    <scope>NUCLEOTIDE SEQUENCE [LARGE SCALE GENOMIC DNA]</scope>
    <source>
        <strain>O157:H7 / Sakai / RIMD 0509952 / EHEC</strain>
    </source>
</reference>
<gene>
    <name evidence="1" type="primary">parC</name>
    <name type="ordered locus">Z4373</name>
    <name type="ordered locus">ECs3903</name>
</gene>
<organism>
    <name type="scientific">Escherichia coli O157:H7</name>
    <dbReference type="NCBI Taxonomy" id="83334"/>
    <lineage>
        <taxon>Bacteria</taxon>
        <taxon>Pseudomonadati</taxon>
        <taxon>Pseudomonadota</taxon>
        <taxon>Gammaproteobacteria</taxon>
        <taxon>Enterobacterales</taxon>
        <taxon>Enterobacteriaceae</taxon>
        <taxon>Escherichia</taxon>
    </lineage>
</organism>
<dbReference type="EC" id="5.6.2.2" evidence="1"/>
<dbReference type="EMBL" id="AE005174">
    <property type="protein sequence ID" value="AAG58155.1"/>
    <property type="molecule type" value="Genomic_DNA"/>
</dbReference>
<dbReference type="EMBL" id="BA000007">
    <property type="protein sequence ID" value="BAB37326.1"/>
    <property type="molecule type" value="Genomic_DNA"/>
</dbReference>
<dbReference type="PIR" id="G85961">
    <property type="entry name" value="G85961"/>
</dbReference>
<dbReference type="PIR" id="G91116">
    <property type="entry name" value="G91116"/>
</dbReference>
<dbReference type="RefSeq" id="NP_311930.1">
    <property type="nucleotide sequence ID" value="NC_002695.1"/>
</dbReference>
<dbReference type="RefSeq" id="WP_001281881.1">
    <property type="nucleotide sequence ID" value="NZ_VOAI01000009.1"/>
</dbReference>
<dbReference type="SMR" id="P0AFI3"/>
<dbReference type="STRING" id="155864.Z4373"/>
<dbReference type="GeneID" id="75203584"/>
<dbReference type="GeneID" id="916274"/>
<dbReference type="KEGG" id="ece:Z4373"/>
<dbReference type="KEGG" id="ecs:ECs_3903"/>
<dbReference type="PATRIC" id="fig|386585.9.peg.4071"/>
<dbReference type="eggNOG" id="COG0188">
    <property type="taxonomic scope" value="Bacteria"/>
</dbReference>
<dbReference type="HOGENOM" id="CLU_002977_6_1_6"/>
<dbReference type="OMA" id="MNVPDGH"/>
<dbReference type="Proteomes" id="UP000000558">
    <property type="component" value="Chromosome"/>
</dbReference>
<dbReference type="Proteomes" id="UP000002519">
    <property type="component" value="Chromosome"/>
</dbReference>
<dbReference type="GO" id="GO:0005694">
    <property type="term" value="C:chromosome"/>
    <property type="evidence" value="ECO:0007669"/>
    <property type="project" value="InterPro"/>
</dbReference>
<dbReference type="GO" id="GO:0005737">
    <property type="term" value="C:cytoplasm"/>
    <property type="evidence" value="ECO:0007669"/>
    <property type="project" value="TreeGrafter"/>
</dbReference>
<dbReference type="GO" id="GO:0009330">
    <property type="term" value="C:DNA topoisomerase type II (double strand cut, ATP-hydrolyzing) complex"/>
    <property type="evidence" value="ECO:0007669"/>
    <property type="project" value="TreeGrafter"/>
</dbReference>
<dbReference type="GO" id="GO:0019897">
    <property type="term" value="C:extrinsic component of plasma membrane"/>
    <property type="evidence" value="ECO:0007669"/>
    <property type="project" value="UniProtKB-UniRule"/>
</dbReference>
<dbReference type="GO" id="GO:0005524">
    <property type="term" value="F:ATP binding"/>
    <property type="evidence" value="ECO:0007669"/>
    <property type="project" value="InterPro"/>
</dbReference>
<dbReference type="GO" id="GO:0003677">
    <property type="term" value="F:DNA binding"/>
    <property type="evidence" value="ECO:0007669"/>
    <property type="project" value="UniProtKB-UniRule"/>
</dbReference>
<dbReference type="GO" id="GO:0003918">
    <property type="term" value="F:DNA topoisomerase type II (double strand cut, ATP-hydrolyzing) activity"/>
    <property type="evidence" value="ECO:0007669"/>
    <property type="project" value="UniProtKB-UniRule"/>
</dbReference>
<dbReference type="GO" id="GO:0007059">
    <property type="term" value="P:chromosome segregation"/>
    <property type="evidence" value="ECO:0007669"/>
    <property type="project" value="UniProtKB-UniRule"/>
</dbReference>
<dbReference type="GO" id="GO:0006265">
    <property type="term" value="P:DNA topological change"/>
    <property type="evidence" value="ECO:0007669"/>
    <property type="project" value="UniProtKB-UniRule"/>
</dbReference>
<dbReference type="CDD" id="cd00187">
    <property type="entry name" value="TOP4c"/>
    <property type="match status" value="1"/>
</dbReference>
<dbReference type="FunFam" id="1.10.268.10:FF:000001">
    <property type="entry name" value="DNA gyrase subunit A"/>
    <property type="match status" value="1"/>
</dbReference>
<dbReference type="FunFam" id="2.120.10.90:FF:000003">
    <property type="entry name" value="DNA topoisomerase 4 subunit A"/>
    <property type="match status" value="1"/>
</dbReference>
<dbReference type="FunFam" id="3.30.1360.40:FF:000005">
    <property type="entry name" value="DNA topoisomerase 4 subunit A"/>
    <property type="match status" value="1"/>
</dbReference>
<dbReference type="Gene3D" id="3.30.1360.40">
    <property type="match status" value="1"/>
</dbReference>
<dbReference type="Gene3D" id="2.120.10.90">
    <property type="entry name" value="DNA gyrase/topoisomerase IV, subunit A, C-terminal"/>
    <property type="match status" value="1"/>
</dbReference>
<dbReference type="Gene3D" id="3.90.199.10">
    <property type="entry name" value="Topoisomerase II, domain 5"/>
    <property type="match status" value="1"/>
</dbReference>
<dbReference type="Gene3D" id="1.10.268.10">
    <property type="entry name" value="Topoisomerase, domain 3"/>
    <property type="match status" value="1"/>
</dbReference>
<dbReference type="HAMAP" id="MF_00936">
    <property type="entry name" value="ParC_type1"/>
    <property type="match status" value="1"/>
</dbReference>
<dbReference type="InterPro" id="IPR006691">
    <property type="entry name" value="GyrA/parC_rep"/>
</dbReference>
<dbReference type="InterPro" id="IPR035516">
    <property type="entry name" value="Gyrase/topoIV_suA_C"/>
</dbReference>
<dbReference type="InterPro" id="IPR013760">
    <property type="entry name" value="Topo_IIA-like_dom_sf"/>
</dbReference>
<dbReference type="InterPro" id="IPR013758">
    <property type="entry name" value="Topo_IIA_A/C_ab"/>
</dbReference>
<dbReference type="InterPro" id="IPR013757">
    <property type="entry name" value="Topo_IIA_A_a_sf"/>
</dbReference>
<dbReference type="InterPro" id="IPR002205">
    <property type="entry name" value="Topo_IIA_dom_A"/>
</dbReference>
<dbReference type="InterPro" id="IPR005742">
    <property type="entry name" value="TopoIV_A_Gneg"/>
</dbReference>
<dbReference type="InterPro" id="IPR050220">
    <property type="entry name" value="Type_II_DNA_Topoisomerases"/>
</dbReference>
<dbReference type="NCBIfam" id="TIGR01062">
    <property type="entry name" value="parC_Gneg"/>
    <property type="match status" value="1"/>
</dbReference>
<dbReference type="NCBIfam" id="NF004044">
    <property type="entry name" value="PRK05561.1"/>
    <property type="match status" value="1"/>
</dbReference>
<dbReference type="PANTHER" id="PTHR43493">
    <property type="entry name" value="DNA GYRASE/TOPOISOMERASE SUBUNIT A"/>
    <property type="match status" value="1"/>
</dbReference>
<dbReference type="PANTHER" id="PTHR43493:SF1">
    <property type="entry name" value="DNA TOPOISOMERASE 4 SUBUNIT A"/>
    <property type="match status" value="1"/>
</dbReference>
<dbReference type="Pfam" id="PF03989">
    <property type="entry name" value="DNA_gyraseA_C"/>
    <property type="match status" value="2"/>
</dbReference>
<dbReference type="Pfam" id="PF00521">
    <property type="entry name" value="DNA_topoisoIV"/>
    <property type="match status" value="1"/>
</dbReference>
<dbReference type="SMART" id="SM00434">
    <property type="entry name" value="TOP4c"/>
    <property type="match status" value="1"/>
</dbReference>
<dbReference type="SUPFAM" id="SSF101904">
    <property type="entry name" value="GyrA/ParC C-terminal domain-like"/>
    <property type="match status" value="1"/>
</dbReference>
<dbReference type="SUPFAM" id="SSF56719">
    <property type="entry name" value="Type II DNA topoisomerase"/>
    <property type="match status" value="1"/>
</dbReference>
<dbReference type="PROSITE" id="PS52040">
    <property type="entry name" value="TOPO_IIA"/>
    <property type="match status" value="1"/>
</dbReference>
<keyword id="KW-1003">Cell membrane</keyword>
<keyword id="KW-0238">DNA-binding</keyword>
<keyword id="KW-0413">Isomerase</keyword>
<keyword id="KW-0472">Membrane</keyword>
<keyword id="KW-1185">Reference proteome</keyword>
<keyword id="KW-0799">Topoisomerase</keyword>
<accession>P0AFI3</accession>
<accession>O69154</accession>
<accession>P20082</accession>